<name>RL1_ECO81</name>
<comment type="function">
    <text evidence="1">Binds directly to 23S rRNA. The L1 stalk is quite mobile in the ribosome, and is involved in E site tRNA release.</text>
</comment>
<comment type="function">
    <text evidence="1">Protein L1 is also a translational repressor protein, it controls the translation of the L11 operon by binding to its mRNA.</text>
</comment>
<comment type="subunit">
    <text evidence="1">Part of the 50S ribosomal subunit.</text>
</comment>
<comment type="similarity">
    <text evidence="1">Belongs to the universal ribosomal protein uL1 family.</text>
</comment>
<sequence>MAKLTKRMRVIREKVDATKQYDINEAIALLKELATAKFVESVDVAVNLGIDARKSDQNVRGATVLPHGTGRSVRVAVFTQGANAEAAKAAGAELVGMEDLADQIKKGEMNFDVVIASPDAMRVVGQLGQVLGPRGLMPNPKVGTVTPNVAEAVKNAKAGQVRYRNDKNGIIHTTIGKVDFDADKLKENLEALLVALKKAKPTQAKGVYIKKVSISTTMGAGVAVDQAGLSASVN</sequence>
<proteinExistence type="inferred from homology"/>
<reference key="1">
    <citation type="journal article" date="2009" name="PLoS Genet.">
        <title>Organised genome dynamics in the Escherichia coli species results in highly diverse adaptive paths.</title>
        <authorList>
            <person name="Touchon M."/>
            <person name="Hoede C."/>
            <person name="Tenaillon O."/>
            <person name="Barbe V."/>
            <person name="Baeriswyl S."/>
            <person name="Bidet P."/>
            <person name="Bingen E."/>
            <person name="Bonacorsi S."/>
            <person name="Bouchier C."/>
            <person name="Bouvet O."/>
            <person name="Calteau A."/>
            <person name="Chiapello H."/>
            <person name="Clermont O."/>
            <person name="Cruveiller S."/>
            <person name="Danchin A."/>
            <person name="Diard M."/>
            <person name="Dossat C."/>
            <person name="Karoui M.E."/>
            <person name="Frapy E."/>
            <person name="Garry L."/>
            <person name="Ghigo J.M."/>
            <person name="Gilles A.M."/>
            <person name="Johnson J."/>
            <person name="Le Bouguenec C."/>
            <person name="Lescat M."/>
            <person name="Mangenot S."/>
            <person name="Martinez-Jehanne V."/>
            <person name="Matic I."/>
            <person name="Nassif X."/>
            <person name="Oztas S."/>
            <person name="Petit M.A."/>
            <person name="Pichon C."/>
            <person name="Rouy Z."/>
            <person name="Ruf C.S."/>
            <person name="Schneider D."/>
            <person name="Tourret J."/>
            <person name="Vacherie B."/>
            <person name="Vallenet D."/>
            <person name="Medigue C."/>
            <person name="Rocha E.P.C."/>
            <person name="Denamur E."/>
        </authorList>
    </citation>
    <scope>NUCLEOTIDE SEQUENCE [LARGE SCALE GENOMIC DNA]</scope>
    <source>
        <strain>ED1a</strain>
    </source>
</reference>
<evidence type="ECO:0000255" key="1">
    <source>
        <dbReference type="HAMAP-Rule" id="MF_01318"/>
    </source>
</evidence>
<evidence type="ECO:0000305" key="2"/>
<dbReference type="EMBL" id="CU928162">
    <property type="protein sequence ID" value="CAR10655.1"/>
    <property type="molecule type" value="Genomic_DNA"/>
</dbReference>
<dbReference type="RefSeq" id="WP_001096684.1">
    <property type="nucleotide sequence ID" value="NC_011745.1"/>
</dbReference>
<dbReference type="SMR" id="B7MR70"/>
<dbReference type="GeneID" id="93777910"/>
<dbReference type="KEGG" id="ecq:ECED1_4691"/>
<dbReference type="HOGENOM" id="CLU_062853_0_0_6"/>
<dbReference type="Proteomes" id="UP000000748">
    <property type="component" value="Chromosome"/>
</dbReference>
<dbReference type="GO" id="GO:0022625">
    <property type="term" value="C:cytosolic large ribosomal subunit"/>
    <property type="evidence" value="ECO:0007669"/>
    <property type="project" value="TreeGrafter"/>
</dbReference>
<dbReference type="GO" id="GO:0019843">
    <property type="term" value="F:rRNA binding"/>
    <property type="evidence" value="ECO:0007669"/>
    <property type="project" value="UniProtKB-UniRule"/>
</dbReference>
<dbReference type="GO" id="GO:0003735">
    <property type="term" value="F:structural constituent of ribosome"/>
    <property type="evidence" value="ECO:0007669"/>
    <property type="project" value="InterPro"/>
</dbReference>
<dbReference type="GO" id="GO:0000049">
    <property type="term" value="F:tRNA binding"/>
    <property type="evidence" value="ECO:0007669"/>
    <property type="project" value="UniProtKB-KW"/>
</dbReference>
<dbReference type="GO" id="GO:0006417">
    <property type="term" value="P:regulation of translation"/>
    <property type="evidence" value="ECO:0007669"/>
    <property type="project" value="UniProtKB-KW"/>
</dbReference>
<dbReference type="GO" id="GO:0006412">
    <property type="term" value="P:translation"/>
    <property type="evidence" value="ECO:0007669"/>
    <property type="project" value="UniProtKB-UniRule"/>
</dbReference>
<dbReference type="CDD" id="cd00403">
    <property type="entry name" value="Ribosomal_L1"/>
    <property type="match status" value="1"/>
</dbReference>
<dbReference type="FunFam" id="3.40.50.790:FF:000001">
    <property type="entry name" value="50S ribosomal protein L1"/>
    <property type="match status" value="1"/>
</dbReference>
<dbReference type="Gene3D" id="3.30.190.20">
    <property type="match status" value="1"/>
</dbReference>
<dbReference type="Gene3D" id="3.40.50.790">
    <property type="match status" value="1"/>
</dbReference>
<dbReference type="HAMAP" id="MF_01318_B">
    <property type="entry name" value="Ribosomal_uL1_B"/>
    <property type="match status" value="1"/>
</dbReference>
<dbReference type="InterPro" id="IPR005878">
    <property type="entry name" value="Ribosom_uL1_bac-type"/>
</dbReference>
<dbReference type="InterPro" id="IPR002143">
    <property type="entry name" value="Ribosomal_uL1"/>
</dbReference>
<dbReference type="InterPro" id="IPR023674">
    <property type="entry name" value="Ribosomal_uL1-like"/>
</dbReference>
<dbReference type="InterPro" id="IPR028364">
    <property type="entry name" value="Ribosomal_uL1/biogenesis"/>
</dbReference>
<dbReference type="InterPro" id="IPR016095">
    <property type="entry name" value="Ribosomal_uL1_3-a/b-sand"/>
</dbReference>
<dbReference type="InterPro" id="IPR023673">
    <property type="entry name" value="Ribosomal_uL1_CS"/>
</dbReference>
<dbReference type="NCBIfam" id="TIGR01169">
    <property type="entry name" value="rplA_bact"/>
    <property type="match status" value="1"/>
</dbReference>
<dbReference type="PANTHER" id="PTHR36427">
    <property type="entry name" value="54S RIBOSOMAL PROTEIN L1, MITOCHONDRIAL"/>
    <property type="match status" value="1"/>
</dbReference>
<dbReference type="PANTHER" id="PTHR36427:SF3">
    <property type="entry name" value="LARGE RIBOSOMAL SUBUNIT PROTEIN UL1M"/>
    <property type="match status" value="1"/>
</dbReference>
<dbReference type="Pfam" id="PF00687">
    <property type="entry name" value="Ribosomal_L1"/>
    <property type="match status" value="1"/>
</dbReference>
<dbReference type="PIRSF" id="PIRSF002155">
    <property type="entry name" value="Ribosomal_L1"/>
    <property type="match status" value="1"/>
</dbReference>
<dbReference type="SUPFAM" id="SSF56808">
    <property type="entry name" value="Ribosomal protein L1"/>
    <property type="match status" value="1"/>
</dbReference>
<dbReference type="PROSITE" id="PS01199">
    <property type="entry name" value="RIBOSOMAL_L1"/>
    <property type="match status" value="1"/>
</dbReference>
<gene>
    <name evidence="1" type="primary">rplA</name>
    <name type="ordered locus">ECED1_4691</name>
</gene>
<feature type="chain" id="PRO_1000165680" description="Large ribosomal subunit protein uL1">
    <location>
        <begin position="1"/>
        <end position="234"/>
    </location>
</feature>
<protein>
    <recommendedName>
        <fullName evidence="1">Large ribosomal subunit protein uL1</fullName>
    </recommendedName>
    <alternativeName>
        <fullName evidence="2">50S ribosomal protein L1</fullName>
    </alternativeName>
</protein>
<accession>B7MR70</accession>
<keyword id="KW-0678">Repressor</keyword>
<keyword id="KW-0687">Ribonucleoprotein</keyword>
<keyword id="KW-0689">Ribosomal protein</keyword>
<keyword id="KW-0694">RNA-binding</keyword>
<keyword id="KW-0699">rRNA-binding</keyword>
<keyword id="KW-0810">Translation regulation</keyword>
<keyword id="KW-0820">tRNA-binding</keyword>
<organism>
    <name type="scientific">Escherichia coli O81 (strain ED1a)</name>
    <dbReference type="NCBI Taxonomy" id="585397"/>
    <lineage>
        <taxon>Bacteria</taxon>
        <taxon>Pseudomonadati</taxon>
        <taxon>Pseudomonadota</taxon>
        <taxon>Gammaproteobacteria</taxon>
        <taxon>Enterobacterales</taxon>
        <taxon>Enterobacteriaceae</taxon>
        <taxon>Escherichia</taxon>
    </lineage>
</organism>